<dbReference type="EC" id="6.3.2.6"/>
<dbReference type="EMBL" id="M58322">
    <property type="protein sequence ID" value="AAA34318.1"/>
    <property type="molecule type" value="Genomic_DNA"/>
</dbReference>
<dbReference type="EMBL" id="D00855">
    <property type="protein sequence ID" value="BAA00731.1"/>
    <property type="molecule type" value="Genomic_DNA"/>
</dbReference>
<dbReference type="PIR" id="JH0489">
    <property type="entry name" value="JH0489"/>
</dbReference>
<dbReference type="PIR" id="S55291">
    <property type="entry name" value="S55291"/>
</dbReference>
<dbReference type="PIR" id="S55292">
    <property type="entry name" value="S55292"/>
</dbReference>
<dbReference type="PIR" id="S55293">
    <property type="entry name" value="S55293"/>
</dbReference>
<dbReference type="SMR" id="P27602"/>
<dbReference type="UniPathway" id="UPA00074">
    <property type="reaction ID" value="UER00131"/>
</dbReference>
<dbReference type="GO" id="GO:0005737">
    <property type="term" value="C:cytoplasm"/>
    <property type="evidence" value="ECO:0007669"/>
    <property type="project" value="TreeGrafter"/>
</dbReference>
<dbReference type="GO" id="GO:0005524">
    <property type="term" value="F:ATP binding"/>
    <property type="evidence" value="ECO:0007669"/>
    <property type="project" value="UniProtKB-KW"/>
</dbReference>
<dbReference type="GO" id="GO:0004639">
    <property type="term" value="F:phosphoribosylaminoimidazolesuccinocarboxamide synthase activity"/>
    <property type="evidence" value="ECO:0007669"/>
    <property type="project" value="UniProtKB-EC"/>
</dbReference>
<dbReference type="GO" id="GO:0006189">
    <property type="term" value="P:'de novo' IMP biosynthetic process"/>
    <property type="evidence" value="ECO:0007669"/>
    <property type="project" value="UniProtKB-UniPathway"/>
</dbReference>
<dbReference type="CDD" id="cd01414">
    <property type="entry name" value="SAICAR_synt_Sc"/>
    <property type="match status" value="1"/>
</dbReference>
<dbReference type="FunFam" id="3.30.200.20:FF:000392">
    <property type="entry name" value="Phosphoribosylaminoimidazole-succinocarboxamide synthase"/>
    <property type="match status" value="1"/>
</dbReference>
<dbReference type="FunFam" id="3.30.470.20:FF:000015">
    <property type="entry name" value="Phosphoribosylaminoimidazole-succinocarboxamide synthase"/>
    <property type="match status" value="1"/>
</dbReference>
<dbReference type="Gene3D" id="3.30.470.20">
    <property type="entry name" value="ATP-grasp fold, B domain"/>
    <property type="match status" value="1"/>
</dbReference>
<dbReference type="Gene3D" id="3.30.200.20">
    <property type="entry name" value="Phosphorylase Kinase, domain 1"/>
    <property type="match status" value="1"/>
</dbReference>
<dbReference type="HAMAP" id="MF_00137">
    <property type="entry name" value="SAICAR_synth"/>
    <property type="match status" value="1"/>
</dbReference>
<dbReference type="InterPro" id="IPR028923">
    <property type="entry name" value="SAICAR_synt/ADE2_N"/>
</dbReference>
<dbReference type="InterPro" id="IPR001636">
    <property type="entry name" value="SAICAR_synth"/>
</dbReference>
<dbReference type="InterPro" id="IPR018236">
    <property type="entry name" value="SAICAR_synthetase_CS"/>
</dbReference>
<dbReference type="NCBIfam" id="NF010568">
    <property type="entry name" value="PRK13961.1"/>
    <property type="match status" value="1"/>
</dbReference>
<dbReference type="NCBIfam" id="TIGR00081">
    <property type="entry name" value="purC"/>
    <property type="match status" value="1"/>
</dbReference>
<dbReference type="PANTHER" id="PTHR43700">
    <property type="entry name" value="PHOSPHORIBOSYLAMINOIMIDAZOLE-SUCCINOCARBOXAMIDE SYNTHASE"/>
    <property type="match status" value="1"/>
</dbReference>
<dbReference type="PANTHER" id="PTHR43700:SF1">
    <property type="entry name" value="PHOSPHORIBOSYLAMINOIMIDAZOLE-SUCCINOCARBOXAMIDE SYNTHASE"/>
    <property type="match status" value="1"/>
</dbReference>
<dbReference type="Pfam" id="PF01259">
    <property type="entry name" value="SAICAR_synt"/>
    <property type="match status" value="1"/>
</dbReference>
<dbReference type="SUPFAM" id="SSF56104">
    <property type="entry name" value="SAICAR synthase-like"/>
    <property type="match status" value="1"/>
</dbReference>
<dbReference type="PROSITE" id="PS01057">
    <property type="entry name" value="SAICAR_SYNTHETASE_1"/>
    <property type="match status" value="1"/>
</dbReference>
<dbReference type="PROSITE" id="PS01058">
    <property type="entry name" value="SAICAR_SYNTHETASE_2"/>
    <property type="match status" value="1"/>
</dbReference>
<proteinExistence type="inferred from homology"/>
<gene>
    <name type="primary">ADE1</name>
</gene>
<organism>
    <name type="scientific">Candida maltosa</name>
    <name type="common">Yeast</name>
    <dbReference type="NCBI Taxonomy" id="5479"/>
    <lineage>
        <taxon>Eukaryota</taxon>
        <taxon>Fungi</taxon>
        <taxon>Dikarya</taxon>
        <taxon>Ascomycota</taxon>
        <taxon>Saccharomycotina</taxon>
        <taxon>Pichiomycetes</taxon>
        <taxon>Debaryomycetaceae</taxon>
        <taxon>Candida/Lodderomyces clade</taxon>
        <taxon>Candida</taxon>
    </lineage>
</organism>
<feature type="chain" id="PRO_0000100924" description="Phosphoribosylaminoimidazole-succinocarboxamide synthase">
    <location>
        <begin position="1"/>
        <end position="291"/>
    </location>
</feature>
<protein>
    <recommendedName>
        <fullName>Phosphoribosylaminoimidazole-succinocarboxamide synthase</fullName>
        <ecNumber>6.3.2.6</ecNumber>
    </recommendedName>
    <alternativeName>
        <fullName>SAICAR synthetase</fullName>
    </alternativeName>
</protein>
<keyword id="KW-0067">ATP-binding</keyword>
<keyword id="KW-0436">Ligase</keyword>
<keyword id="KW-0547">Nucleotide-binding</keyword>
<keyword id="KW-0658">Purine biosynthesis</keyword>
<accession>P27602</accession>
<comment type="catalytic activity">
    <reaction>
        <text>5-amino-1-(5-phospho-D-ribosyl)imidazole-4-carboxylate + L-aspartate + ATP = (2S)-2-[5-amino-1-(5-phospho-beta-D-ribosyl)imidazole-4-carboxamido]succinate + ADP + phosphate + 2 H(+)</text>
        <dbReference type="Rhea" id="RHEA:22628"/>
        <dbReference type="ChEBI" id="CHEBI:15378"/>
        <dbReference type="ChEBI" id="CHEBI:29991"/>
        <dbReference type="ChEBI" id="CHEBI:30616"/>
        <dbReference type="ChEBI" id="CHEBI:43474"/>
        <dbReference type="ChEBI" id="CHEBI:58443"/>
        <dbReference type="ChEBI" id="CHEBI:77657"/>
        <dbReference type="ChEBI" id="CHEBI:456216"/>
        <dbReference type="EC" id="6.3.2.6"/>
    </reaction>
</comment>
<comment type="pathway">
    <text>Purine metabolism; IMP biosynthesis via de novo pathway; 5-amino-1-(5-phospho-D-ribosyl)imidazole-4-carboxamide from 5-amino-1-(5-phospho-D-ribosyl)imidazole-4-carboxylate: step 1/2.</text>
</comment>
<comment type="similarity">
    <text evidence="1">Belongs to the SAICAR synthetase family.</text>
</comment>
<reference key="1">
    <citation type="journal article" date="1991" name="Gene">
        <title>Molecular cloning of the Candida maltosa ADE1 gene.</title>
        <authorList>
            <person name="Sasnauskas K."/>
            <person name="Jomantiene R."/>
            <person name="Geneviciute E."/>
            <person name="Januska A."/>
            <person name="Lebedys J."/>
        </authorList>
    </citation>
    <scope>NUCLEOTIDE SEQUENCE [GENOMIC DNA]</scope>
    <source>
        <strain>VSB-899</strain>
    </source>
</reference>
<reference key="2">
    <citation type="submission" date="1994-05" db="EMBL/GenBank/DDBJ databases">
        <authorList>
            <person name="Sasnauskas K."/>
        </authorList>
    </citation>
    <scope>SEQUENCE REVISION</scope>
</reference>
<reference key="3">
    <citation type="journal article" date="1991" name="Agric. Biol. Chem.">
        <title>Isolation and sequencing of a gene, C-ADE1, and its use for a host-vector system in Candida maltosa with two genetic markers.</title>
        <authorList>
            <person name="Kawai S."/>
            <person name="Hikiji T."/>
            <person name="Murao S."/>
            <person name="Takagi M."/>
            <person name="Yano K."/>
        </authorList>
    </citation>
    <scope>NUCLEOTIDE SEQUENCE [GENOMIC DNA]</scope>
    <source>
        <strain>ATCC 28140 / CBS 5611 / IAM 12247 / JCM 1504 / NBRC 1977</strain>
    </source>
</reference>
<evidence type="ECO:0000305" key="1"/>
<sequence>MTSTNLEGTFPLIAKGKVRDIYQVDDNTLLFVATDRISAYDVIMSNGIPNKGKILTKLSEFWFDFLPIENHLIKGDIFQKYPQLEPYRNQLEGRSLLVRKLKLIPLEVIVRGYITGSGWKEYQKSKTVHGIPIGDVVESQQITPIFTPSTKAEQGEHDENITKEQADKIVGKELCDRIEKIAIDLYTKARDYAATKGIIIADTKFEFGLDGDNIVLVDEVLTPDSSRFWNAAKYEVGKSQDSYDKQFLRDWLTSNGVAGKDGVAMPEDIVTETKSKYVEAYENLTGDKWQE</sequence>
<name>PUR7_CANMA</name>